<gene>
    <name evidence="1" type="primary">argS</name>
    <name type="ordered locus">Sama_0443</name>
</gene>
<sequence length="581" mass="64310">MKELIQSLLEQTLESLKAQGIVPADFEARIQVDRTKDKSHGDLATNLAMMLTKVAGKPPREMAQLIIDNLPASAQVAKVEIAGPGFINFFIDDNALANQLKAALGDAMLGVKAAAPQTVVVDYSSPNLAKEMHVGHLRSTIIGDSVVRALEFLGHKVIRQNHVGDWGTQFGMLLAYMEELRAQGDDKANLELSDLESFYRAAKLRFDESDEFATRARQLVVELQSGDAYCNKLWREFNDISLSHCHDVYARLGVSLTRKDVHGESAYNADLAQVVADLDAKGLLAISDGAKVVFQEEFRNKDGEPLPVIIQKADGGFLYATTDLAAMRYRSGVLNADRVLYFVDLRQALHFQQVFSLARTAGFVRDNMTLEHMGFGTMNGEDGRPFKTRSGGVVKLVDLLDEAVERAEQLVRSKNPDMDETEVKEIARVVGIASVKYADLSKNRSSDYIFSFEQMLSFEGNTAPYLLYAYTRVAGIFKKAENIDLTNAELVLDHDKEKELGNKLAQFGEILARMVDKGQPHILCGYLYELAGAFSSFYEACPVLSADSETARDSRLLLSRLTADTLKQGLSLLGIETLERM</sequence>
<feature type="chain" id="PRO_1000018111" description="Arginine--tRNA ligase">
    <location>
        <begin position="1"/>
        <end position="581"/>
    </location>
</feature>
<feature type="short sequence motif" description="'HIGH' region">
    <location>
        <begin position="126"/>
        <end position="136"/>
    </location>
</feature>
<accession>A1S2P7</accession>
<comment type="catalytic activity">
    <reaction evidence="1">
        <text>tRNA(Arg) + L-arginine + ATP = L-arginyl-tRNA(Arg) + AMP + diphosphate</text>
        <dbReference type="Rhea" id="RHEA:20301"/>
        <dbReference type="Rhea" id="RHEA-COMP:9658"/>
        <dbReference type="Rhea" id="RHEA-COMP:9673"/>
        <dbReference type="ChEBI" id="CHEBI:30616"/>
        <dbReference type="ChEBI" id="CHEBI:32682"/>
        <dbReference type="ChEBI" id="CHEBI:33019"/>
        <dbReference type="ChEBI" id="CHEBI:78442"/>
        <dbReference type="ChEBI" id="CHEBI:78513"/>
        <dbReference type="ChEBI" id="CHEBI:456215"/>
        <dbReference type="EC" id="6.1.1.19"/>
    </reaction>
</comment>
<comment type="subunit">
    <text evidence="1">Monomer.</text>
</comment>
<comment type="subcellular location">
    <subcellularLocation>
        <location evidence="1">Cytoplasm</location>
    </subcellularLocation>
</comment>
<comment type="similarity">
    <text evidence="1">Belongs to the class-I aminoacyl-tRNA synthetase family.</text>
</comment>
<dbReference type="EC" id="6.1.1.19" evidence="1"/>
<dbReference type="EMBL" id="CP000507">
    <property type="protein sequence ID" value="ABL98653.1"/>
    <property type="molecule type" value="Genomic_DNA"/>
</dbReference>
<dbReference type="RefSeq" id="WP_011758563.1">
    <property type="nucleotide sequence ID" value="NC_008700.1"/>
</dbReference>
<dbReference type="SMR" id="A1S2P7"/>
<dbReference type="STRING" id="326297.Sama_0443"/>
<dbReference type="KEGG" id="saz:Sama_0443"/>
<dbReference type="eggNOG" id="COG0018">
    <property type="taxonomic scope" value="Bacteria"/>
</dbReference>
<dbReference type="HOGENOM" id="CLU_006406_5_1_6"/>
<dbReference type="OrthoDB" id="9803211at2"/>
<dbReference type="Proteomes" id="UP000009175">
    <property type="component" value="Chromosome"/>
</dbReference>
<dbReference type="GO" id="GO:0005737">
    <property type="term" value="C:cytoplasm"/>
    <property type="evidence" value="ECO:0007669"/>
    <property type="project" value="UniProtKB-SubCell"/>
</dbReference>
<dbReference type="GO" id="GO:0004814">
    <property type="term" value="F:arginine-tRNA ligase activity"/>
    <property type="evidence" value="ECO:0007669"/>
    <property type="project" value="UniProtKB-UniRule"/>
</dbReference>
<dbReference type="GO" id="GO:0005524">
    <property type="term" value="F:ATP binding"/>
    <property type="evidence" value="ECO:0007669"/>
    <property type="project" value="UniProtKB-UniRule"/>
</dbReference>
<dbReference type="GO" id="GO:0006420">
    <property type="term" value="P:arginyl-tRNA aminoacylation"/>
    <property type="evidence" value="ECO:0007669"/>
    <property type="project" value="UniProtKB-UniRule"/>
</dbReference>
<dbReference type="CDD" id="cd07956">
    <property type="entry name" value="Anticodon_Ia_Arg"/>
    <property type="match status" value="1"/>
</dbReference>
<dbReference type="CDD" id="cd00671">
    <property type="entry name" value="ArgRS_core"/>
    <property type="match status" value="1"/>
</dbReference>
<dbReference type="FunFam" id="3.30.1360.70:FF:000003">
    <property type="entry name" value="Arginine--tRNA ligase"/>
    <property type="match status" value="1"/>
</dbReference>
<dbReference type="FunFam" id="3.40.50.620:FF:000030">
    <property type="entry name" value="Arginine--tRNA ligase"/>
    <property type="match status" value="1"/>
</dbReference>
<dbReference type="FunFam" id="1.10.730.10:FF:000006">
    <property type="entry name" value="Arginyl-tRNA synthetase 2, mitochondrial"/>
    <property type="match status" value="1"/>
</dbReference>
<dbReference type="Gene3D" id="3.30.1360.70">
    <property type="entry name" value="Arginyl tRNA synthetase N-terminal domain"/>
    <property type="match status" value="1"/>
</dbReference>
<dbReference type="Gene3D" id="3.40.50.620">
    <property type="entry name" value="HUPs"/>
    <property type="match status" value="1"/>
</dbReference>
<dbReference type="Gene3D" id="1.10.730.10">
    <property type="entry name" value="Isoleucyl-tRNA Synthetase, Domain 1"/>
    <property type="match status" value="1"/>
</dbReference>
<dbReference type="HAMAP" id="MF_00123">
    <property type="entry name" value="Arg_tRNA_synth"/>
    <property type="match status" value="1"/>
</dbReference>
<dbReference type="InterPro" id="IPR001412">
    <property type="entry name" value="aa-tRNA-synth_I_CS"/>
</dbReference>
<dbReference type="InterPro" id="IPR001278">
    <property type="entry name" value="Arg-tRNA-ligase"/>
</dbReference>
<dbReference type="InterPro" id="IPR005148">
    <property type="entry name" value="Arg-tRNA-synth_N"/>
</dbReference>
<dbReference type="InterPro" id="IPR036695">
    <property type="entry name" value="Arg-tRNA-synth_N_sf"/>
</dbReference>
<dbReference type="InterPro" id="IPR035684">
    <property type="entry name" value="ArgRS_core"/>
</dbReference>
<dbReference type="InterPro" id="IPR008909">
    <property type="entry name" value="DALR_anticod-bd"/>
</dbReference>
<dbReference type="InterPro" id="IPR014729">
    <property type="entry name" value="Rossmann-like_a/b/a_fold"/>
</dbReference>
<dbReference type="InterPro" id="IPR009080">
    <property type="entry name" value="tRNAsynth_Ia_anticodon-bd"/>
</dbReference>
<dbReference type="NCBIfam" id="TIGR00456">
    <property type="entry name" value="argS"/>
    <property type="match status" value="1"/>
</dbReference>
<dbReference type="PANTHER" id="PTHR11956:SF5">
    <property type="entry name" value="ARGININE--TRNA LIGASE, CYTOPLASMIC"/>
    <property type="match status" value="1"/>
</dbReference>
<dbReference type="PANTHER" id="PTHR11956">
    <property type="entry name" value="ARGINYL-TRNA SYNTHETASE"/>
    <property type="match status" value="1"/>
</dbReference>
<dbReference type="Pfam" id="PF03485">
    <property type="entry name" value="Arg_tRNA_synt_N"/>
    <property type="match status" value="1"/>
</dbReference>
<dbReference type="Pfam" id="PF05746">
    <property type="entry name" value="DALR_1"/>
    <property type="match status" value="1"/>
</dbReference>
<dbReference type="Pfam" id="PF00750">
    <property type="entry name" value="tRNA-synt_1d"/>
    <property type="match status" value="1"/>
</dbReference>
<dbReference type="PRINTS" id="PR01038">
    <property type="entry name" value="TRNASYNTHARG"/>
</dbReference>
<dbReference type="SMART" id="SM01016">
    <property type="entry name" value="Arg_tRNA_synt_N"/>
    <property type="match status" value="1"/>
</dbReference>
<dbReference type="SMART" id="SM00836">
    <property type="entry name" value="DALR_1"/>
    <property type="match status" value="1"/>
</dbReference>
<dbReference type="SUPFAM" id="SSF47323">
    <property type="entry name" value="Anticodon-binding domain of a subclass of class I aminoacyl-tRNA synthetases"/>
    <property type="match status" value="1"/>
</dbReference>
<dbReference type="SUPFAM" id="SSF55190">
    <property type="entry name" value="Arginyl-tRNA synthetase (ArgRS), N-terminal 'additional' domain"/>
    <property type="match status" value="1"/>
</dbReference>
<dbReference type="SUPFAM" id="SSF52374">
    <property type="entry name" value="Nucleotidylyl transferase"/>
    <property type="match status" value="1"/>
</dbReference>
<dbReference type="PROSITE" id="PS00178">
    <property type="entry name" value="AA_TRNA_LIGASE_I"/>
    <property type="match status" value="1"/>
</dbReference>
<keyword id="KW-0030">Aminoacyl-tRNA synthetase</keyword>
<keyword id="KW-0067">ATP-binding</keyword>
<keyword id="KW-0963">Cytoplasm</keyword>
<keyword id="KW-0436">Ligase</keyword>
<keyword id="KW-0547">Nucleotide-binding</keyword>
<keyword id="KW-0648">Protein biosynthesis</keyword>
<keyword id="KW-1185">Reference proteome</keyword>
<proteinExistence type="inferred from homology"/>
<protein>
    <recommendedName>
        <fullName evidence="1">Arginine--tRNA ligase</fullName>
        <ecNumber evidence="1">6.1.1.19</ecNumber>
    </recommendedName>
    <alternativeName>
        <fullName evidence="1">Arginyl-tRNA synthetase</fullName>
        <shortName evidence="1">ArgRS</shortName>
    </alternativeName>
</protein>
<reference key="1">
    <citation type="submission" date="2006-12" db="EMBL/GenBank/DDBJ databases">
        <title>Complete sequence of Shewanella amazonensis SB2B.</title>
        <authorList>
            <consortium name="US DOE Joint Genome Institute"/>
            <person name="Copeland A."/>
            <person name="Lucas S."/>
            <person name="Lapidus A."/>
            <person name="Barry K."/>
            <person name="Detter J.C."/>
            <person name="Glavina del Rio T."/>
            <person name="Hammon N."/>
            <person name="Israni S."/>
            <person name="Dalin E."/>
            <person name="Tice H."/>
            <person name="Pitluck S."/>
            <person name="Munk A.C."/>
            <person name="Brettin T."/>
            <person name="Bruce D."/>
            <person name="Han C."/>
            <person name="Tapia R."/>
            <person name="Gilna P."/>
            <person name="Schmutz J."/>
            <person name="Larimer F."/>
            <person name="Land M."/>
            <person name="Hauser L."/>
            <person name="Kyrpides N."/>
            <person name="Mikhailova N."/>
            <person name="Fredrickson J."/>
            <person name="Richardson P."/>
        </authorList>
    </citation>
    <scope>NUCLEOTIDE SEQUENCE [LARGE SCALE GENOMIC DNA]</scope>
    <source>
        <strain>ATCC BAA-1098 / SB2B</strain>
    </source>
</reference>
<evidence type="ECO:0000255" key="1">
    <source>
        <dbReference type="HAMAP-Rule" id="MF_00123"/>
    </source>
</evidence>
<name>SYR_SHEAM</name>
<organism>
    <name type="scientific">Shewanella amazonensis (strain ATCC BAA-1098 / SB2B)</name>
    <dbReference type="NCBI Taxonomy" id="326297"/>
    <lineage>
        <taxon>Bacteria</taxon>
        <taxon>Pseudomonadati</taxon>
        <taxon>Pseudomonadota</taxon>
        <taxon>Gammaproteobacteria</taxon>
        <taxon>Alteromonadales</taxon>
        <taxon>Shewanellaceae</taxon>
        <taxon>Shewanella</taxon>
    </lineage>
</organism>